<protein>
    <recommendedName>
        <fullName evidence="1">Small ribosomal subunit protein uS9z</fullName>
    </recommendedName>
    <alternativeName>
        <fullName>40S ribosomal protein S16-1</fullName>
    </alternativeName>
</protein>
<proteinExistence type="evidence at transcript level"/>
<feature type="chain" id="PRO_0000250171" description="Small ribosomal subunit protein uS9z">
    <location>
        <begin position="1"/>
        <end position="146"/>
    </location>
</feature>
<keyword id="KW-1185">Reference proteome</keyword>
<keyword id="KW-0687">Ribonucleoprotein</keyword>
<keyword id="KW-0689">Ribosomal protein</keyword>
<gene>
    <name type="primary">RPS16A</name>
    <name type="ordered locus">At2g09990</name>
    <name type="ORF">F7B19.13</name>
</gene>
<sequence>MATQPATESVQCFGRKKTAVAVTHCKRGSGLIKLNGCPIELFQPEILRFKIFEPILLLGKHRFAGVNMRIRVNGGGHTSQVYAIRQSIAKALVAYYQKYVDEQSKKEIKDILVRYDRTLLVADPRRCEPKKFGGRGARSRYQKSYR</sequence>
<reference key="1">
    <citation type="journal article" date="1999" name="Nature">
        <title>Sequence and analysis of chromosome 2 of the plant Arabidopsis thaliana.</title>
        <authorList>
            <person name="Lin X."/>
            <person name="Kaul S."/>
            <person name="Rounsley S.D."/>
            <person name="Shea T.P."/>
            <person name="Benito M.-I."/>
            <person name="Town C.D."/>
            <person name="Fujii C.Y."/>
            <person name="Mason T.M."/>
            <person name="Bowman C.L."/>
            <person name="Barnstead M.E."/>
            <person name="Feldblyum T.V."/>
            <person name="Buell C.R."/>
            <person name="Ketchum K.A."/>
            <person name="Lee J.J."/>
            <person name="Ronning C.M."/>
            <person name="Koo H.L."/>
            <person name="Moffat K.S."/>
            <person name="Cronin L.A."/>
            <person name="Shen M."/>
            <person name="Pai G."/>
            <person name="Van Aken S."/>
            <person name="Umayam L."/>
            <person name="Tallon L.J."/>
            <person name="Gill J.E."/>
            <person name="Adams M.D."/>
            <person name="Carrera A.J."/>
            <person name="Creasy T.H."/>
            <person name="Goodman H.M."/>
            <person name="Somerville C.R."/>
            <person name="Copenhaver G.P."/>
            <person name="Preuss D."/>
            <person name="Nierman W.C."/>
            <person name="White O."/>
            <person name="Eisen J.A."/>
            <person name="Salzberg S.L."/>
            <person name="Fraser C.M."/>
            <person name="Venter J.C."/>
        </authorList>
    </citation>
    <scope>NUCLEOTIDE SEQUENCE [LARGE SCALE GENOMIC DNA]</scope>
    <source>
        <strain>cv. Columbia</strain>
    </source>
</reference>
<reference key="2">
    <citation type="journal article" date="2017" name="Plant J.">
        <title>Araport11: a complete reannotation of the Arabidopsis thaliana reference genome.</title>
        <authorList>
            <person name="Cheng C.Y."/>
            <person name="Krishnakumar V."/>
            <person name="Chan A.P."/>
            <person name="Thibaud-Nissen F."/>
            <person name="Schobel S."/>
            <person name="Town C.D."/>
        </authorList>
    </citation>
    <scope>GENOME REANNOTATION</scope>
    <source>
        <strain>cv. Columbia</strain>
    </source>
</reference>
<reference key="3">
    <citation type="journal article" date="2003" name="Science">
        <title>Empirical analysis of transcriptional activity in the Arabidopsis genome.</title>
        <authorList>
            <person name="Yamada K."/>
            <person name="Lim J."/>
            <person name="Dale J.M."/>
            <person name="Chen H."/>
            <person name="Shinn P."/>
            <person name="Palm C.J."/>
            <person name="Southwick A.M."/>
            <person name="Wu H.C."/>
            <person name="Kim C.J."/>
            <person name="Nguyen M."/>
            <person name="Pham P.K."/>
            <person name="Cheuk R.F."/>
            <person name="Karlin-Newmann G."/>
            <person name="Liu S.X."/>
            <person name="Lam B."/>
            <person name="Sakano H."/>
            <person name="Wu T."/>
            <person name="Yu G."/>
            <person name="Miranda M."/>
            <person name="Quach H.L."/>
            <person name="Tripp M."/>
            <person name="Chang C.H."/>
            <person name="Lee J.M."/>
            <person name="Toriumi M.J."/>
            <person name="Chan M.M."/>
            <person name="Tang C.C."/>
            <person name="Onodera C.S."/>
            <person name="Deng J.M."/>
            <person name="Akiyama K."/>
            <person name="Ansari Y."/>
            <person name="Arakawa T."/>
            <person name="Banh J."/>
            <person name="Banno F."/>
            <person name="Bowser L."/>
            <person name="Brooks S.Y."/>
            <person name="Carninci P."/>
            <person name="Chao Q."/>
            <person name="Choy N."/>
            <person name="Enju A."/>
            <person name="Goldsmith A.D."/>
            <person name="Gurjal M."/>
            <person name="Hansen N.F."/>
            <person name="Hayashizaki Y."/>
            <person name="Johnson-Hopson C."/>
            <person name="Hsuan V.W."/>
            <person name="Iida K."/>
            <person name="Karnes M."/>
            <person name="Khan S."/>
            <person name="Koesema E."/>
            <person name="Ishida J."/>
            <person name="Jiang P.X."/>
            <person name="Jones T."/>
            <person name="Kawai J."/>
            <person name="Kamiya A."/>
            <person name="Meyers C."/>
            <person name="Nakajima M."/>
            <person name="Narusaka M."/>
            <person name="Seki M."/>
            <person name="Sakurai T."/>
            <person name="Satou M."/>
            <person name="Tamse R."/>
            <person name="Vaysberg M."/>
            <person name="Wallender E.K."/>
            <person name="Wong C."/>
            <person name="Yamamura Y."/>
            <person name="Yuan S."/>
            <person name="Shinozaki K."/>
            <person name="Davis R.W."/>
            <person name="Theologis A."/>
            <person name="Ecker J.R."/>
        </authorList>
    </citation>
    <scope>NUCLEOTIDE SEQUENCE [LARGE SCALE MRNA]</scope>
    <source>
        <strain>cv. Columbia</strain>
    </source>
</reference>
<reference key="4">
    <citation type="submission" date="2002-03" db="EMBL/GenBank/DDBJ databases">
        <title>Full-length cDNA from Arabidopsis thaliana.</title>
        <authorList>
            <person name="Brover V.V."/>
            <person name="Troukhan M.E."/>
            <person name="Alexandrov N.A."/>
            <person name="Lu Y.-P."/>
            <person name="Flavell R.B."/>
            <person name="Feldmann K.A."/>
        </authorList>
    </citation>
    <scope>NUCLEOTIDE SEQUENCE [LARGE SCALE MRNA]</scope>
</reference>
<reference key="5">
    <citation type="journal article" date="2001" name="Plant Physiol.">
        <title>The organization of cytoplasmic ribosomal protein genes in the Arabidopsis genome.</title>
        <authorList>
            <person name="Barakat A."/>
            <person name="Szick-Miranda K."/>
            <person name="Chang I.-F."/>
            <person name="Guyot R."/>
            <person name="Blanc G."/>
            <person name="Cooke R."/>
            <person name="Delseny M."/>
            <person name="Bailey-Serres J."/>
        </authorList>
    </citation>
    <scope>GENE FAMILY ORGANIZATION</scope>
    <scope>NOMENCLATURE</scope>
</reference>
<reference key="6">
    <citation type="journal article" date="2023" name="Plant Cell">
        <title>An updated nomenclature for plant ribosomal protein genes.</title>
        <authorList>
            <person name="Scarpin M.R."/>
            <person name="Busche M."/>
            <person name="Martinez R.E."/>
            <person name="Harper L.C."/>
            <person name="Reiser L."/>
            <person name="Szakonyi D."/>
            <person name="Merchante C."/>
            <person name="Lan T."/>
            <person name="Xiong W."/>
            <person name="Mo B."/>
            <person name="Tang G."/>
            <person name="Chen X."/>
            <person name="Bailey-Serres J."/>
            <person name="Browning K.S."/>
            <person name="Brunkard J.O."/>
        </authorList>
    </citation>
    <scope>NOMENCLATURE</scope>
</reference>
<comment type="similarity">
    <text evidence="2">Belongs to the universal ribosomal protein uS9 family.</text>
</comment>
<organism>
    <name type="scientific">Arabidopsis thaliana</name>
    <name type="common">Mouse-ear cress</name>
    <dbReference type="NCBI Taxonomy" id="3702"/>
    <lineage>
        <taxon>Eukaryota</taxon>
        <taxon>Viridiplantae</taxon>
        <taxon>Streptophyta</taxon>
        <taxon>Embryophyta</taxon>
        <taxon>Tracheophyta</taxon>
        <taxon>Spermatophyta</taxon>
        <taxon>Magnoliopsida</taxon>
        <taxon>eudicotyledons</taxon>
        <taxon>Gunneridae</taxon>
        <taxon>Pentapetalae</taxon>
        <taxon>rosids</taxon>
        <taxon>malvids</taxon>
        <taxon>Brassicales</taxon>
        <taxon>Brassicaceae</taxon>
        <taxon>Camelineae</taxon>
        <taxon>Arabidopsis</taxon>
    </lineage>
</organism>
<accession>Q9SK22</accession>
<dbReference type="EMBL" id="AC006586">
    <property type="protein sequence ID" value="AAD22696.1"/>
    <property type="molecule type" value="Genomic_DNA"/>
</dbReference>
<dbReference type="EMBL" id="CP002685">
    <property type="protein sequence ID" value="AEC06138.1"/>
    <property type="molecule type" value="Genomic_DNA"/>
</dbReference>
<dbReference type="EMBL" id="AF370576">
    <property type="protein sequence ID" value="AAK49582.1"/>
    <property type="molecule type" value="mRNA"/>
</dbReference>
<dbReference type="EMBL" id="AY086902">
    <property type="protein sequence ID" value="AAM63947.1"/>
    <property type="molecule type" value="mRNA"/>
</dbReference>
<dbReference type="PIR" id="E84489">
    <property type="entry name" value="E84489"/>
</dbReference>
<dbReference type="RefSeq" id="NP_178826.1">
    <property type="nucleotide sequence ID" value="NM_126785.2"/>
</dbReference>
<dbReference type="SMR" id="Q9SK22"/>
<dbReference type="BioGRID" id="839">
    <property type="interactions" value="154"/>
</dbReference>
<dbReference type="FunCoup" id="Q9SK22">
    <property type="interactions" value="2618"/>
</dbReference>
<dbReference type="STRING" id="3702.Q9SK22"/>
<dbReference type="PaxDb" id="3702-AT2G09990.1"/>
<dbReference type="ProteomicsDB" id="226544"/>
<dbReference type="EnsemblPlants" id="AT2G09990.1">
    <property type="protein sequence ID" value="AT2G09990.1"/>
    <property type="gene ID" value="AT2G09990"/>
</dbReference>
<dbReference type="GeneID" id="815456"/>
<dbReference type="Gramene" id="AT2G09990.1">
    <property type="protein sequence ID" value="AT2G09990.1"/>
    <property type="gene ID" value="AT2G09990"/>
</dbReference>
<dbReference type="KEGG" id="ath:AT2G09990"/>
<dbReference type="Araport" id="AT2G09990"/>
<dbReference type="TAIR" id="AT2G09990"/>
<dbReference type="eggNOG" id="KOG1753">
    <property type="taxonomic scope" value="Eukaryota"/>
</dbReference>
<dbReference type="HOGENOM" id="CLU_046483_4_0_1"/>
<dbReference type="InParanoid" id="Q9SK22"/>
<dbReference type="OMA" id="WPIEMAR"/>
<dbReference type="PhylomeDB" id="Q9SK22"/>
<dbReference type="CD-CODE" id="4299E36E">
    <property type="entry name" value="Nucleolus"/>
</dbReference>
<dbReference type="PRO" id="PR:Q9SK22"/>
<dbReference type="Proteomes" id="UP000006548">
    <property type="component" value="Chromosome 2"/>
</dbReference>
<dbReference type="ExpressionAtlas" id="Q9SK22">
    <property type="expression patterns" value="baseline and differential"/>
</dbReference>
<dbReference type="GO" id="GO:0009507">
    <property type="term" value="C:chloroplast"/>
    <property type="evidence" value="ECO:0007005"/>
    <property type="project" value="TAIR"/>
</dbReference>
<dbReference type="GO" id="GO:0022626">
    <property type="term" value="C:cytosolic ribosome"/>
    <property type="evidence" value="ECO:0007005"/>
    <property type="project" value="TAIR"/>
</dbReference>
<dbReference type="GO" id="GO:0022627">
    <property type="term" value="C:cytosolic small ribosomal subunit"/>
    <property type="evidence" value="ECO:0007005"/>
    <property type="project" value="TAIR"/>
</dbReference>
<dbReference type="GO" id="GO:0005739">
    <property type="term" value="C:mitochondrion"/>
    <property type="evidence" value="ECO:0007005"/>
    <property type="project" value="TAIR"/>
</dbReference>
<dbReference type="GO" id="GO:0009505">
    <property type="term" value="C:plant-type cell wall"/>
    <property type="evidence" value="ECO:0007005"/>
    <property type="project" value="TAIR"/>
</dbReference>
<dbReference type="GO" id="GO:0009506">
    <property type="term" value="C:plasmodesma"/>
    <property type="evidence" value="ECO:0007005"/>
    <property type="project" value="TAIR"/>
</dbReference>
<dbReference type="GO" id="GO:0003729">
    <property type="term" value="F:mRNA binding"/>
    <property type="evidence" value="ECO:0000314"/>
    <property type="project" value="TAIR"/>
</dbReference>
<dbReference type="GO" id="GO:0003735">
    <property type="term" value="F:structural constituent of ribosome"/>
    <property type="evidence" value="ECO:0000314"/>
    <property type="project" value="CAFA"/>
</dbReference>
<dbReference type="GO" id="GO:0006412">
    <property type="term" value="P:translation"/>
    <property type="evidence" value="ECO:0007669"/>
    <property type="project" value="InterPro"/>
</dbReference>
<dbReference type="FunFam" id="3.30.230.10:FF:000007">
    <property type="entry name" value="40S ribosomal protein S16"/>
    <property type="match status" value="1"/>
</dbReference>
<dbReference type="Gene3D" id="3.30.230.10">
    <property type="match status" value="1"/>
</dbReference>
<dbReference type="InterPro" id="IPR020568">
    <property type="entry name" value="Ribosomal_Su5_D2-typ_SF"/>
</dbReference>
<dbReference type="InterPro" id="IPR000754">
    <property type="entry name" value="Ribosomal_uS9"/>
</dbReference>
<dbReference type="InterPro" id="IPR020574">
    <property type="entry name" value="Ribosomal_uS9_CS"/>
</dbReference>
<dbReference type="InterPro" id="IPR014721">
    <property type="entry name" value="Ribsml_uS5_D2-typ_fold_subgr"/>
</dbReference>
<dbReference type="PANTHER" id="PTHR21569:SF16">
    <property type="entry name" value="RIBOSOMAL PROTEIN S16"/>
    <property type="match status" value="1"/>
</dbReference>
<dbReference type="PANTHER" id="PTHR21569">
    <property type="entry name" value="RIBOSOMAL PROTEIN S9"/>
    <property type="match status" value="1"/>
</dbReference>
<dbReference type="Pfam" id="PF00380">
    <property type="entry name" value="Ribosomal_S9"/>
    <property type="match status" value="1"/>
</dbReference>
<dbReference type="SUPFAM" id="SSF54211">
    <property type="entry name" value="Ribosomal protein S5 domain 2-like"/>
    <property type="match status" value="1"/>
</dbReference>
<dbReference type="PROSITE" id="PS00360">
    <property type="entry name" value="RIBOSOMAL_S9"/>
    <property type="match status" value="1"/>
</dbReference>
<evidence type="ECO:0000303" key="1">
    <source>
    </source>
</evidence>
<evidence type="ECO:0000305" key="2"/>
<name>RS161_ARATH</name>